<proteinExistence type="inferred from homology"/>
<name>PLSY_BURTA</name>
<accession>Q2T0L4</accession>
<organism>
    <name type="scientific">Burkholderia thailandensis (strain ATCC 700388 / DSM 13276 / CCUG 48851 / CIP 106301 / E264)</name>
    <dbReference type="NCBI Taxonomy" id="271848"/>
    <lineage>
        <taxon>Bacteria</taxon>
        <taxon>Pseudomonadati</taxon>
        <taxon>Pseudomonadota</taxon>
        <taxon>Betaproteobacteria</taxon>
        <taxon>Burkholderiales</taxon>
        <taxon>Burkholderiaceae</taxon>
        <taxon>Burkholderia</taxon>
        <taxon>pseudomallei group</taxon>
    </lineage>
</organism>
<dbReference type="EC" id="2.3.1.275" evidence="1"/>
<dbReference type="EMBL" id="CP000086">
    <property type="protein sequence ID" value="ABC37820.1"/>
    <property type="molecule type" value="Genomic_DNA"/>
</dbReference>
<dbReference type="RefSeq" id="WP_009892677.1">
    <property type="nucleotide sequence ID" value="NZ_CP008785.1"/>
</dbReference>
<dbReference type="SMR" id="Q2T0L4"/>
<dbReference type="GeneID" id="45120485"/>
<dbReference type="KEGG" id="bte:BTH_I0729"/>
<dbReference type="HOGENOM" id="CLU_081254_0_0_4"/>
<dbReference type="UniPathway" id="UPA00085"/>
<dbReference type="Proteomes" id="UP000001930">
    <property type="component" value="Chromosome I"/>
</dbReference>
<dbReference type="GO" id="GO:0005886">
    <property type="term" value="C:plasma membrane"/>
    <property type="evidence" value="ECO:0007669"/>
    <property type="project" value="UniProtKB-SubCell"/>
</dbReference>
<dbReference type="GO" id="GO:0043772">
    <property type="term" value="F:acyl-phosphate glycerol-3-phosphate acyltransferase activity"/>
    <property type="evidence" value="ECO:0007669"/>
    <property type="project" value="UniProtKB-UniRule"/>
</dbReference>
<dbReference type="GO" id="GO:0008654">
    <property type="term" value="P:phospholipid biosynthetic process"/>
    <property type="evidence" value="ECO:0007669"/>
    <property type="project" value="UniProtKB-UniRule"/>
</dbReference>
<dbReference type="HAMAP" id="MF_01043">
    <property type="entry name" value="PlsY"/>
    <property type="match status" value="1"/>
</dbReference>
<dbReference type="InterPro" id="IPR003811">
    <property type="entry name" value="G3P_acylTferase_PlsY"/>
</dbReference>
<dbReference type="NCBIfam" id="TIGR00023">
    <property type="entry name" value="glycerol-3-phosphate 1-O-acyltransferase PlsY"/>
    <property type="match status" value="1"/>
</dbReference>
<dbReference type="PANTHER" id="PTHR30309:SF0">
    <property type="entry name" value="GLYCEROL-3-PHOSPHATE ACYLTRANSFERASE-RELATED"/>
    <property type="match status" value="1"/>
</dbReference>
<dbReference type="PANTHER" id="PTHR30309">
    <property type="entry name" value="INNER MEMBRANE PROTEIN YGIH"/>
    <property type="match status" value="1"/>
</dbReference>
<dbReference type="Pfam" id="PF02660">
    <property type="entry name" value="G3P_acyltransf"/>
    <property type="match status" value="1"/>
</dbReference>
<dbReference type="SMART" id="SM01207">
    <property type="entry name" value="G3P_acyltransf"/>
    <property type="match status" value="1"/>
</dbReference>
<keyword id="KW-0997">Cell inner membrane</keyword>
<keyword id="KW-1003">Cell membrane</keyword>
<keyword id="KW-0444">Lipid biosynthesis</keyword>
<keyword id="KW-0443">Lipid metabolism</keyword>
<keyword id="KW-0472">Membrane</keyword>
<keyword id="KW-0594">Phospholipid biosynthesis</keyword>
<keyword id="KW-1208">Phospholipid metabolism</keyword>
<keyword id="KW-0808">Transferase</keyword>
<keyword id="KW-0812">Transmembrane</keyword>
<keyword id="KW-1133">Transmembrane helix</keyword>
<protein>
    <recommendedName>
        <fullName evidence="1">Glycerol-3-phosphate acyltransferase</fullName>
    </recommendedName>
    <alternativeName>
        <fullName evidence="1">Acyl-PO4 G3P acyltransferase</fullName>
    </alternativeName>
    <alternativeName>
        <fullName evidence="1">Acyl-phosphate--glycerol-3-phosphate acyltransferase</fullName>
    </alternativeName>
    <alternativeName>
        <fullName evidence="1">G3P acyltransferase</fullName>
        <shortName evidence="1">GPAT</shortName>
        <ecNumber evidence="1">2.3.1.275</ecNumber>
    </alternativeName>
    <alternativeName>
        <fullName evidence="1">Lysophosphatidic acid synthase</fullName>
        <shortName evidence="1">LPA synthase</shortName>
    </alternativeName>
</protein>
<evidence type="ECO:0000255" key="1">
    <source>
        <dbReference type="HAMAP-Rule" id="MF_01043"/>
    </source>
</evidence>
<comment type="function">
    <text evidence="1">Catalyzes the transfer of an acyl group from acyl-phosphate (acyl-PO(4)) to glycerol-3-phosphate (G3P) to form lysophosphatidic acid (LPA). This enzyme utilizes acyl-phosphate as fatty acyl donor, but not acyl-CoA or acyl-ACP.</text>
</comment>
<comment type="catalytic activity">
    <reaction evidence="1">
        <text>an acyl phosphate + sn-glycerol 3-phosphate = a 1-acyl-sn-glycero-3-phosphate + phosphate</text>
        <dbReference type="Rhea" id="RHEA:34075"/>
        <dbReference type="ChEBI" id="CHEBI:43474"/>
        <dbReference type="ChEBI" id="CHEBI:57597"/>
        <dbReference type="ChEBI" id="CHEBI:57970"/>
        <dbReference type="ChEBI" id="CHEBI:59918"/>
        <dbReference type="EC" id="2.3.1.275"/>
    </reaction>
</comment>
<comment type="pathway">
    <text evidence="1">Lipid metabolism; phospholipid metabolism.</text>
</comment>
<comment type="subunit">
    <text evidence="1">Probably interacts with PlsX.</text>
</comment>
<comment type="subcellular location">
    <subcellularLocation>
        <location evidence="1">Cell inner membrane</location>
        <topology evidence="1">Multi-pass membrane protein</topology>
    </subcellularLocation>
</comment>
<comment type="similarity">
    <text evidence="1">Belongs to the PlsY family.</text>
</comment>
<sequence>MQILLATVAAYLIGSVSFAVVVSAAMGLADPRSYGSKNPGATNVLRGGNKKAAILTLVGDAFKGWLAVWLVKHFGIGGEIGVALAAIAVFLGHLYPVFFRFQGGKGVATAAGVLLAVHPALGLATALTWLIIAFFFRYSSLAALVAAVFAPVFDVFLFGTRNNPVAWAVIAMSALLIWRHRSNISKLLAGEESRIGQKKTDA</sequence>
<reference key="1">
    <citation type="journal article" date="2005" name="BMC Genomics">
        <title>Bacterial genome adaptation to niches: divergence of the potential virulence genes in three Burkholderia species of different survival strategies.</title>
        <authorList>
            <person name="Kim H.S."/>
            <person name="Schell M.A."/>
            <person name="Yu Y."/>
            <person name="Ulrich R.L."/>
            <person name="Sarria S.H."/>
            <person name="Nierman W.C."/>
            <person name="DeShazer D."/>
        </authorList>
    </citation>
    <scope>NUCLEOTIDE SEQUENCE [LARGE SCALE GENOMIC DNA]</scope>
    <source>
        <strain>ATCC 700388 / DSM 13276 / CCUG 48851 / CIP 106301 / E264</strain>
    </source>
</reference>
<gene>
    <name evidence="1" type="primary">plsY</name>
    <name type="ordered locus">BTH_I0729</name>
</gene>
<feature type="chain" id="PRO_0000250291" description="Glycerol-3-phosphate acyltransferase">
    <location>
        <begin position="1"/>
        <end position="202"/>
    </location>
</feature>
<feature type="transmembrane region" description="Helical" evidence="1">
    <location>
        <begin position="3"/>
        <end position="23"/>
    </location>
</feature>
<feature type="transmembrane region" description="Helical" evidence="1">
    <location>
        <begin position="51"/>
        <end position="71"/>
    </location>
</feature>
<feature type="transmembrane region" description="Helical" evidence="1">
    <location>
        <begin position="74"/>
        <end position="94"/>
    </location>
</feature>
<feature type="transmembrane region" description="Helical" evidence="1">
    <location>
        <begin position="116"/>
        <end position="136"/>
    </location>
</feature>
<feature type="transmembrane region" description="Helical" evidence="1">
    <location>
        <begin position="140"/>
        <end position="160"/>
    </location>
</feature>